<name>PUS10_CENSY</name>
<evidence type="ECO:0000255" key="1">
    <source>
        <dbReference type="HAMAP-Rule" id="MF_01893"/>
    </source>
</evidence>
<evidence type="ECO:0000256" key="2">
    <source>
        <dbReference type="SAM" id="MobiDB-lite"/>
    </source>
</evidence>
<protein>
    <recommendedName>
        <fullName evidence="1">tRNA pseudouridine synthase Pus10</fullName>
        <ecNumber evidence="1">5.4.99.25</ecNumber>
    </recommendedName>
    <alternativeName>
        <fullName evidence="1">tRNA pseudouridine 54/55 synthase</fullName>
        <shortName evidence="1">Psi54/55 synthase</shortName>
    </alternativeName>
</protein>
<sequence length="402" mass="42855">MRPERGYVLCDPCLGRLFGSGNILHCEKRGRIIRGKGRDRPSECHICKGLCPSLEESCGPSLWGAAAYEFETFVVGVRLKSSMAERDDEVRSRCRLAGAAALRAYVAAMLSSYLGAMTGASVDHGAPELSITADLRDNTAEFHPRPVVLSGRYTKSVRGLSQKGAPCGGCAGEGCTSCGMLGVDTGGSVEGVISGHACGTYSARRASFTWVGGEDQESLVGGRGRPFVAQLVQPHRRGLVHPATVRLGGVVLHGLREVRSMPQLPVRFRSKVRLAVSAKGEISDDTLGRLADLGGSTLAVYEGRRRVERAIHSASHSRTGPGSFELHMEVDGGVPFKRFVSGETVFPNLSDLLGTVCSCGGFDFEEITVERGGHPGARGGTRRRPRKGPARPAGGRDRPRKT</sequence>
<accession>A0RUP0</accession>
<reference key="1">
    <citation type="journal article" date="2006" name="Proc. Natl. Acad. Sci. U.S.A.">
        <title>Genomic analysis of the uncultivated marine crenarchaeote Cenarchaeum symbiosum.</title>
        <authorList>
            <person name="Hallam S.J."/>
            <person name="Konstantinidis K.T."/>
            <person name="Putnam N."/>
            <person name="Schleper C."/>
            <person name="Watanabe Y."/>
            <person name="Sugahara J."/>
            <person name="Preston C."/>
            <person name="de la Torre J."/>
            <person name="Richardson P.M."/>
            <person name="DeLong E.F."/>
        </authorList>
    </citation>
    <scope>NUCLEOTIDE SEQUENCE [LARGE SCALE GENOMIC DNA]</scope>
    <source>
        <strain>A</strain>
    </source>
</reference>
<feature type="chain" id="PRO_0000407384" description="tRNA pseudouridine synthase Pus10">
    <location>
        <begin position="1"/>
        <end position="402"/>
    </location>
</feature>
<feature type="region of interest" description="Disordered" evidence="2">
    <location>
        <begin position="370"/>
        <end position="402"/>
    </location>
</feature>
<feature type="compositionally biased region" description="Basic residues" evidence="2">
    <location>
        <begin position="380"/>
        <end position="389"/>
    </location>
</feature>
<feature type="active site" description="Nucleophile" evidence="1">
    <location>
        <position position="215"/>
    </location>
</feature>
<dbReference type="EC" id="5.4.99.25" evidence="1"/>
<dbReference type="EMBL" id="DP000238">
    <property type="protein sequence ID" value="ABK77057.1"/>
    <property type="molecule type" value="Genomic_DNA"/>
</dbReference>
<dbReference type="STRING" id="414004.CENSYa_0422"/>
<dbReference type="EnsemblBacteria" id="ABK77057">
    <property type="protein sequence ID" value="ABK77057"/>
    <property type="gene ID" value="CENSYa_0422"/>
</dbReference>
<dbReference type="KEGG" id="csy:CENSYa_0422"/>
<dbReference type="HOGENOM" id="CLU_028780_2_0_2"/>
<dbReference type="Proteomes" id="UP000000758">
    <property type="component" value="Chromosome"/>
</dbReference>
<dbReference type="GO" id="GO:0000049">
    <property type="term" value="F:tRNA binding"/>
    <property type="evidence" value="ECO:0007669"/>
    <property type="project" value="InterPro"/>
</dbReference>
<dbReference type="GO" id="GO:0160148">
    <property type="term" value="F:tRNA pseudouridine(55) synthase activity"/>
    <property type="evidence" value="ECO:0007669"/>
    <property type="project" value="UniProtKB-EC"/>
</dbReference>
<dbReference type="GO" id="GO:0031119">
    <property type="term" value="P:tRNA pseudouridine synthesis"/>
    <property type="evidence" value="ECO:0007669"/>
    <property type="project" value="UniProtKB-UniRule"/>
</dbReference>
<dbReference type="Gene3D" id="3.30.70.2510">
    <property type="match status" value="1"/>
</dbReference>
<dbReference type="HAMAP" id="MF_01893">
    <property type="entry name" value="Pus10_arch"/>
    <property type="match status" value="1"/>
</dbReference>
<dbReference type="InterPro" id="IPR005912">
    <property type="entry name" value="Pus10"/>
</dbReference>
<dbReference type="InterPro" id="IPR039894">
    <property type="entry name" value="Pus10-like"/>
</dbReference>
<dbReference type="InterPro" id="IPR048741">
    <property type="entry name" value="Pus10-like_C"/>
</dbReference>
<dbReference type="InterPro" id="IPR055174">
    <property type="entry name" value="Pus10_THUMP_arc"/>
</dbReference>
<dbReference type="PANTHER" id="PTHR21568">
    <property type="entry name" value="TRNA PSEUDOURIDINE SYNTHASE PUS10"/>
    <property type="match status" value="1"/>
</dbReference>
<dbReference type="PANTHER" id="PTHR21568:SF0">
    <property type="entry name" value="TRNA PSEUDOURIDINE SYNTHASE PUS10"/>
    <property type="match status" value="1"/>
</dbReference>
<dbReference type="Pfam" id="PF21238">
    <property type="entry name" value="Pus10_C"/>
    <property type="match status" value="1"/>
</dbReference>
<dbReference type="Pfam" id="PF22023">
    <property type="entry name" value="Pus10_THUMP_arc"/>
    <property type="match status" value="1"/>
</dbReference>
<organism>
    <name type="scientific">Cenarchaeum symbiosum (strain A)</name>
    <dbReference type="NCBI Taxonomy" id="414004"/>
    <lineage>
        <taxon>Archaea</taxon>
        <taxon>Nitrososphaerota</taxon>
        <taxon>Candidatus Cenarchaeales</taxon>
        <taxon>Candidatus Cenarchaeaceae</taxon>
        <taxon>Candidatus Cenarchaeum</taxon>
    </lineage>
</organism>
<gene>
    <name evidence="1" type="primary">pus10</name>
    <name type="ordered locus">CENSYa_0422</name>
</gene>
<keyword id="KW-0413">Isomerase</keyword>
<keyword id="KW-1185">Reference proteome</keyword>
<keyword id="KW-0694">RNA-binding</keyword>
<keyword id="KW-0819">tRNA processing</keyword>
<comment type="function">
    <text evidence="1">Responsible for synthesis of pseudouridine from uracil-54 and uracil-55 in the psi GC loop of transfer RNAs.</text>
</comment>
<comment type="catalytic activity">
    <reaction evidence="1">
        <text>uridine(54) in tRNA = pseudouridine(54) in tRNA</text>
        <dbReference type="Rhea" id="RHEA:57876"/>
        <dbReference type="Rhea" id="RHEA-COMP:10193"/>
        <dbReference type="Rhea" id="RHEA-COMP:14141"/>
        <dbReference type="ChEBI" id="CHEBI:65314"/>
        <dbReference type="ChEBI" id="CHEBI:65315"/>
    </reaction>
</comment>
<comment type="catalytic activity">
    <reaction evidence="1">
        <text>uridine(55) in tRNA = pseudouridine(55) in tRNA</text>
        <dbReference type="Rhea" id="RHEA:42532"/>
        <dbReference type="Rhea" id="RHEA-COMP:10101"/>
        <dbReference type="Rhea" id="RHEA-COMP:10102"/>
        <dbReference type="ChEBI" id="CHEBI:65314"/>
        <dbReference type="ChEBI" id="CHEBI:65315"/>
        <dbReference type="EC" id="5.4.99.25"/>
    </reaction>
</comment>
<comment type="similarity">
    <text evidence="1">Belongs to the pseudouridine synthase Pus10 family.</text>
</comment>
<proteinExistence type="inferred from homology"/>